<evidence type="ECO:0000255" key="1">
    <source>
        <dbReference type="HAMAP-Rule" id="MF_00372"/>
    </source>
</evidence>
<protein>
    <recommendedName>
        <fullName evidence="1">Imidazolonepropionase</fullName>
        <ecNumber evidence="1">3.5.2.7</ecNumber>
    </recommendedName>
    <alternativeName>
        <fullName evidence="1">Imidazolone-5-propionate hydrolase</fullName>
    </alternativeName>
</protein>
<feature type="chain" id="PRO_0000306426" description="Imidazolonepropionase">
    <location>
        <begin position="1"/>
        <end position="400"/>
    </location>
</feature>
<feature type="binding site" evidence="1">
    <location>
        <position position="64"/>
    </location>
    <ligand>
        <name>Fe(3+)</name>
        <dbReference type="ChEBI" id="CHEBI:29034"/>
    </ligand>
</feature>
<feature type="binding site" evidence="1">
    <location>
        <position position="64"/>
    </location>
    <ligand>
        <name>Zn(2+)</name>
        <dbReference type="ChEBI" id="CHEBI:29105"/>
    </ligand>
</feature>
<feature type="binding site" evidence="1">
    <location>
        <position position="66"/>
    </location>
    <ligand>
        <name>Fe(3+)</name>
        <dbReference type="ChEBI" id="CHEBI:29034"/>
    </ligand>
</feature>
<feature type="binding site" evidence="1">
    <location>
        <position position="66"/>
    </location>
    <ligand>
        <name>Zn(2+)</name>
        <dbReference type="ChEBI" id="CHEBI:29105"/>
    </ligand>
</feature>
<feature type="binding site" evidence="1">
    <location>
        <position position="73"/>
    </location>
    <ligand>
        <name>4-imidazolone-5-propanoate</name>
        <dbReference type="ChEBI" id="CHEBI:77893"/>
    </ligand>
</feature>
<feature type="binding site" evidence="1">
    <location>
        <position position="131"/>
    </location>
    <ligand>
        <name>4-imidazolone-5-propanoate</name>
        <dbReference type="ChEBI" id="CHEBI:77893"/>
    </ligand>
</feature>
<feature type="binding site" evidence="1">
    <location>
        <position position="131"/>
    </location>
    <ligand>
        <name>N-formimidoyl-L-glutamate</name>
        <dbReference type="ChEBI" id="CHEBI:58928"/>
    </ligand>
</feature>
<feature type="binding site" evidence="1">
    <location>
        <position position="158"/>
    </location>
    <ligand>
        <name>4-imidazolone-5-propanoate</name>
        <dbReference type="ChEBI" id="CHEBI:77893"/>
    </ligand>
</feature>
<feature type="binding site" evidence="1">
    <location>
        <position position="219"/>
    </location>
    <ligand>
        <name>Fe(3+)</name>
        <dbReference type="ChEBI" id="CHEBI:29034"/>
    </ligand>
</feature>
<feature type="binding site" evidence="1">
    <location>
        <position position="219"/>
    </location>
    <ligand>
        <name>Zn(2+)</name>
        <dbReference type="ChEBI" id="CHEBI:29105"/>
    </ligand>
</feature>
<feature type="binding site" evidence="1">
    <location>
        <position position="222"/>
    </location>
    <ligand>
        <name>4-imidazolone-5-propanoate</name>
        <dbReference type="ChEBI" id="CHEBI:77893"/>
    </ligand>
</feature>
<feature type="binding site" evidence="1">
    <location>
        <position position="305"/>
    </location>
    <ligand>
        <name>N-formimidoyl-L-glutamate</name>
        <dbReference type="ChEBI" id="CHEBI:58928"/>
    </ligand>
</feature>
<feature type="binding site" evidence="1">
    <location>
        <position position="307"/>
    </location>
    <ligand>
        <name>N-formimidoyl-L-glutamate</name>
        <dbReference type="ChEBI" id="CHEBI:58928"/>
    </ligand>
</feature>
<feature type="binding site" evidence="1">
    <location>
        <position position="308"/>
    </location>
    <ligand>
        <name>4-imidazolone-5-propanoate</name>
        <dbReference type="ChEBI" id="CHEBI:77893"/>
    </ligand>
</feature>
<reference key="1">
    <citation type="journal article" date="2013" name="Stand. Genomic Sci.">
        <title>Complete genome sequence of Arthrobacter sp. strain FB24.</title>
        <authorList>
            <person name="Nakatsu C.H."/>
            <person name="Barabote R."/>
            <person name="Thompson S."/>
            <person name="Bruce D."/>
            <person name="Detter C."/>
            <person name="Brettin T."/>
            <person name="Han C."/>
            <person name="Beasley F."/>
            <person name="Chen W."/>
            <person name="Konopka A."/>
            <person name="Xie G."/>
        </authorList>
    </citation>
    <scope>NUCLEOTIDE SEQUENCE [LARGE SCALE GENOMIC DNA]</scope>
    <source>
        <strain>FB24</strain>
    </source>
</reference>
<accession>A0JUI7</accession>
<proteinExistence type="inferred from homology"/>
<dbReference type="EC" id="3.5.2.7" evidence="1"/>
<dbReference type="EMBL" id="CP000454">
    <property type="protein sequence ID" value="ABK02707.1"/>
    <property type="molecule type" value="Genomic_DNA"/>
</dbReference>
<dbReference type="RefSeq" id="WP_011691174.1">
    <property type="nucleotide sequence ID" value="NC_008541.1"/>
</dbReference>
<dbReference type="SMR" id="A0JUI7"/>
<dbReference type="STRING" id="290399.Arth_1313"/>
<dbReference type="KEGG" id="art:Arth_1313"/>
<dbReference type="eggNOG" id="COG1228">
    <property type="taxonomic scope" value="Bacteria"/>
</dbReference>
<dbReference type="HOGENOM" id="CLU_041647_1_0_11"/>
<dbReference type="OrthoDB" id="9776455at2"/>
<dbReference type="UniPathway" id="UPA00379">
    <property type="reaction ID" value="UER00551"/>
</dbReference>
<dbReference type="Proteomes" id="UP000000754">
    <property type="component" value="Chromosome"/>
</dbReference>
<dbReference type="GO" id="GO:0005737">
    <property type="term" value="C:cytoplasm"/>
    <property type="evidence" value="ECO:0007669"/>
    <property type="project" value="UniProtKB-SubCell"/>
</dbReference>
<dbReference type="GO" id="GO:0050480">
    <property type="term" value="F:imidazolonepropionase activity"/>
    <property type="evidence" value="ECO:0007669"/>
    <property type="project" value="UniProtKB-UniRule"/>
</dbReference>
<dbReference type="GO" id="GO:0005506">
    <property type="term" value="F:iron ion binding"/>
    <property type="evidence" value="ECO:0007669"/>
    <property type="project" value="UniProtKB-UniRule"/>
</dbReference>
<dbReference type="GO" id="GO:0008270">
    <property type="term" value="F:zinc ion binding"/>
    <property type="evidence" value="ECO:0007669"/>
    <property type="project" value="UniProtKB-UniRule"/>
</dbReference>
<dbReference type="GO" id="GO:0019556">
    <property type="term" value="P:L-histidine catabolic process to glutamate and formamide"/>
    <property type="evidence" value="ECO:0007669"/>
    <property type="project" value="UniProtKB-UniPathway"/>
</dbReference>
<dbReference type="GO" id="GO:0019557">
    <property type="term" value="P:L-histidine catabolic process to glutamate and formate"/>
    <property type="evidence" value="ECO:0007669"/>
    <property type="project" value="UniProtKB-UniPathway"/>
</dbReference>
<dbReference type="Gene3D" id="3.20.20.140">
    <property type="entry name" value="Metal-dependent hydrolases"/>
    <property type="match status" value="1"/>
</dbReference>
<dbReference type="Gene3D" id="2.30.40.10">
    <property type="entry name" value="Urease, subunit C, domain 1"/>
    <property type="match status" value="1"/>
</dbReference>
<dbReference type="HAMAP" id="MF_00372">
    <property type="entry name" value="HutI"/>
    <property type="match status" value="1"/>
</dbReference>
<dbReference type="InterPro" id="IPR005920">
    <property type="entry name" value="HutI"/>
</dbReference>
<dbReference type="InterPro" id="IPR011059">
    <property type="entry name" value="Metal-dep_hydrolase_composite"/>
</dbReference>
<dbReference type="InterPro" id="IPR032466">
    <property type="entry name" value="Metal_Hydrolase"/>
</dbReference>
<dbReference type="NCBIfam" id="TIGR01224">
    <property type="entry name" value="hutI"/>
    <property type="match status" value="1"/>
</dbReference>
<dbReference type="PANTHER" id="PTHR42752">
    <property type="entry name" value="IMIDAZOLONEPROPIONASE"/>
    <property type="match status" value="1"/>
</dbReference>
<dbReference type="PANTHER" id="PTHR42752:SF1">
    <property type="entry name" value="IMIDAZOLONEPROPIONASE-RELATED"/>
    <property type="match status" value="1"/>
</dbReference>
<dbReference type="SUPFAM" id="SSF51338">
    <property type="entry name" value="Composite domain of metallo-dependent hydrolases"/>
    <property type="match status" value="1"/>
</dbReference>
<dbReference type="SUPFAM" id="SSF51556">
    <property type="entry name" value="Metallo-dependent hydrolases"/>
    <property type="match status" value="1"/>
</dbReference>
<name>HUTI_ARTS2</name>
<keyword id="KW-0963">Cytoplasm</keyword>
<keyword id="KW-0369">Histidine metabolism</keyword>
<keyword id="KW-0378">Hydrolase</keyword>
<keyword id="KW-0408">Iron</keyword>
<keyword id="KW-0479">Metal-binding</keyword>
<keyword id="KW-1185">Reference proteome</keyword>
<keyword id="KW-0862">Zinc</keyword>
<gene>
    <name evidence="1" type="primary">hutI</name>
    <name type="ordered locus">Arth_1313</name>
</gene>
<sequence length="400" mass="41829">MSTLITNIAELMTQDAEHRVLKDAAVVIEGERISWIGPSSAAPAADDEVDAGGRALLPGWVDSHTHLIFAGDRTAEFEARMAGESYSAGGIAVTTGATRGTSDFDLTRLALGRVAEAVSQGTTYLETKTGYGLDVENETRSARIASTVADEVTYLGAHLVPAGADADEYTDLVCGPMLAAVRPYVSWADVFCEQGAFNEQQSRRVLQACKDAGMGLRVHGNQLGEGPGVRLAVEFGAASVDHVNYLSAADVEALAGSWSGWQGAGTRGTVATCLPACDLSTRQPLAPGRELLDAGVPIALASNCNPGTSYTSSMAFCVTTAVLQMRLSVHEAVRAATYGGALALRREAGNDVDGERAVGSVAIGHRADLHLLNAPSATHLAYRPGIPLTHAVWRAGVRAR</sequence>
<comment type="function">
    <text evidence="1">Catalyzes the hydrolytic cleavage of the carbon-nitrogen bond in imidazolone-5-propanoate to yield N-formimidoyl-L-glutamate. It is the third step in the universal histidine degradation pathway.</text>
</comment>
<comment type="catalytic activity">
    <reaction evidence="1">
        <text>4-imidazolone-5-propanoate + H2O = N-formimidoyl-L-glutamate</text>
        <dbReference type="Rhea" id="RHEA:23660"/>
        <dbReference type="ChEBI" id="CHEBI:15377"/>
        <dbReference type="ChEBI" id="CHEBI:58928"/>
        <dbReference type="ChEBI" id="CHEBI:77893"/>
        <dbReference type="EC" id="3.5.2.7"/>
    </reaction>
</comment>
<comment type="cofactor">
    <cofactor evidence="1">
        <name>Zn(2+)</name>
        <dbReference type="ChEBI" id="CHEBI:29105"/>
    </cofactor>
    <cofactor evidence="1">
        <name>Fe(3+)</name>
        <dbReference type="ChEBI" id="CHEBI:29034"/>
    </cofactor>
    <text evidence="1">Binds 1 zinc or iron ion per subunit.</text>
</comment>
<comment type="pathway">
    <text evidence="1">Amino-acid degradation; L-histidine degradation into L-glutamate; N-formimidoyl-L-glutamate from L-histidine: step 3/3.</text>
</comment>
<comment type="subcellular location">
    <subcellularLocation>
        <location evidence="1">Cytoplasm</location>
    </subcellularLocation>
</comment>
<comment type="similarity">
    <text evidence="1">Belongs to the metallo-dependent hydrolases superfamily. HutI family.</text>
</comment>
<organism>
    <name type="scientific">Arthrobacter sp. (strain FB24)</name>
    <dbReference type="NCBI Taxonomy" id="290399"/>
    <lineage>
        <taxon>Bacteria</taxon>
        <taxon>Bacillati</taxon>
        <taxon>Actinomycetota</taxon>
        <taxon>Actinomycetes</taxon>
        <taxon>Micrococcales</taxon>
        <taxon>Micrococcaceae</taxon>
        <taxon>Arthrobacter</taxon>
    </lineage>
</organism>